<accession>Q5FU01</accession>
<comment type="subunit">
    <text evidence="1">Part of the 50S ribosomal subunit.</text>
</comment>
<comment type="similarity">
    <text evidence="1">Belongs to the universal ribosomal protein uL30 family.</text>
</comment>
<proteinExistence type="inferred from homology"/>
<name>RL30_GLUOX</name>
<organism>
    <name type="scientific">Gluconobacter oxydans (strain 621H)</name>
    <name type="common">Gluconobacter suboxydans</name>
    <dbReference type="NCBI Taxonomy" id="290633"/>
    <lineage>
        <taxon>Bacteria</taxon>
        <taxon>Pseudomonadati</taxon>
        <taxon>Pseudomonadota</taxon>
        <taxon>Alphaproteobacteria</taxon>
        <taxon>Acetobacterales</taxon>
        <taxon>Acetobacteraceae</taxon>
        <taxon>Gluconobacter</taxon>
    </lineage>
</organism>
<sequence>MAENGKTVQVTQIASVIGRKPGQAETITGLGLRGIGSTRTLEDTPAVRGMIRKVAHLIKVEG</sequence>
<protein>
    <recommendedName>
        <fullName evidence="1">Large ribosomal subunit protein uL30</fullName>
    </recommendedName>
    <alternativeName>
        <fullName evidence="2">50S ribosomal protein L30</fullName>
    </alternativeName>
</protein>
<keyword id="KW-1185">Reference proteome</keyword>
<keyword id="KW-0687">Ribonucleoprotein</keyword>
<keyword id="KW-0689">Ribosomal protein</keyword>
<dbReference type="EMBL" id="CP000009">
    <property type="protein sequence ID" value="AAW60145.1"/>
    <property type="molecule type" value="Genomic_DNA"/>
</dbReference>
<dbReference type="RefSeq" id="WP_011251948.1">
    <property type="nucleotide sequence ID" value="NZ_LT900338.1"/>
</dbReference>
<dbReference type="SMR" id="Q5FU01"/>
<dbReference type="STRING" id="290633.GOX0362"/>
<dbReference type="GeneID" id="76195064"/>
<dbReference type="KEGG" id="gox:GOX0362"/>
<dbReference type="eggNOG" id="COG1841">
    <property type="taxonomic scope" value="Bacteria"/>
</dbReference>
<dbReference type="HOGENOM" id="CLU_131047_1_4_5"/>
<dbReference type="Proteomes" id="UP000006375">
    <property type="component" value="Chromosome"/>
</dbReference>
<dbReference type="GO" id="GO:0022625">
    <property type="term" value="C:cytosolic large ribosomal subunit"/>
    <property type="evidence" value="ECO:0007669"/>
    <property type="project" value="TreeGrafter"/>
</dbReference>
<dbReference type="GO" id="GO:0003735">
    <property type="term" value="F:structural constituent of ribosome"/>
    <property type="evidence" value="ECO:0007669"/>
    <property type="project" value="InterPro"/>
</dbReference>
<dbReference type="GO" id="GO:0006412">
    <property type="term" value="P:translation"/>
    <property type="evidence" value="ECO:0007669"/>
    <property type="project" value="UniProtKB-UniRule"/>
</dbReference>
<dbReference type="CDD" id="cd01658">
    <property type="entry name" value="Ribosomal_L30"/>
    <property type="match status" value="1"/>
</dbReference>
<dbReference type="Gene3D" id="3.30.1390.20">
    <property type="entry name" value="Ribosomal protein L30, ferredoxin-like fold domain"/>
    <property type="match status" value="1"/>
</dbReference>
<dbReference type="HAMAP" id="MF_01371_B">
    <property type="entry name" value="Ribosomal_uL30_B"/>
    <property type="match status" value="1"/>
</dbReference>
<dbReference type="InterPro" id="IPR036919">
    <property type="entry name" value="Ribo_uL30_ferredoxin-like_sf"/>
</dbReference>
<dbReference type="InterPro" id="IPR005996">
    <property type="entry name" value="Ribosomal_uL30_bac-type"/>
</dbReference>
<dbReference type="InterPro" id="IPR018038">
    <property type="entry name" value="Ribosomal_uL30_CS"/>
</dbReference>
<dbReference type="InterPro" id="IPR016082">
    <property type="entry name" value="Ribosomal_uL30_ferredoxin-like"/>
</dbReference>
<dbReference type="NCBIfam" id="TIGR01308">
    <property type="entry name" value="rpmD_bact"/>
    <property type="match status" value="1"/>
</dbReference>
<dbReference type="PANTHER" id="PTHR15892:SF2">
    <property type="entry name" value="LARGE RIBOSOMAL SUBUNIT PROTEIN UL30M"/>
    <property type="match status" value="1"/>
</dbReference>
<dbReference type="PANTHER" id="PTHR15892">
    <property type="entry name" value="MITOCHONDRIAL RIBOSOMAL PROTEIN L30"/>
    <property type="match status" value="1"/>
</dbReference>
<dbReference type="Pfam" id="PF00327">
    <property type="entry name" value="Ribosomal_L30"/>
    <property type="match status" value="1"/>
</dbReference>
<dbReference type="PIRSF" id="PIRSF002211">
    <property type="entry name" value="Ribosomal_L30_bac-type"/>
    <property type="match status" value="1"/>
</dbReference>
<dbReference type="SUPFAM" id="SSF55129">
    <property type="entry name" value="Ribosomal protein L30p/L7e"/>
    <property type="match status" value="1"/>
</dbReference>
<dbReference type="PROSITE" id="PS00634">
    <property type="entry name" value="RIBOSOMAL_L30"/>
    <property type="match status" value="1"/>
</dbReference>
<gene>
    <name evidence="1" type="primary">rpmD</name>
    <name type="ordered locus">GOX0362</name>
</gene>
<evidence type="ECO:0000255" key="1">
    <source>
        <dbReference type="HAMAP-Rule" id="MF_01371"/>
    </source>
</evidence>
<evidence type="ECO:0000305" key="2"/>
<reference key="1">
    <citation type="journal article" date="2005" name="Nat. Biotechnol.">
        <title>Complete genome sequence of the acetic acid bacterium Gluconobacter oxydans.</title>
        <authorList>
            <person name="Prust C."/>
            <person name="Hoffmeister M."/>
            <person name="Liesegang H."/>
            <person name="Wiezer A."/>
            <person name="Fricke W.F."/>
            <person name="Ehrenreich A."/>
            <person name="Gottschalk G."/>
            <person name="Deppenmeier U."/>
        </authorList>
    </citation>
    <scope>NUCLEOTIDE SEQUENCE [LARGE SCALE GENOMIC DNA]</scope>
    <source>
        <strain>621H</strain>
    </source>
</reference>
<feature type="chain" id="PRO_0000273793" description="Large ribosomal subunit protein uL30">
    <location>
        <begin position="1"/>
        <end position="62"/>
    </location>
</feature>